<protein>
    <recommendedName>
        <fullName evidence="1">Small ribosomal subunit protein uS19</fullName>
    </recommendedName>
    <alternativeName>
        <fullName evidence="2">30S ribosomal protein S19</fullName>
    </alternativeName>
</protein>
<organism>
    <name type="scientific">Lactococcus lactis subsp. lactis (strain IL1403)</name>
    <name type="common">Streptococcus lactis</name>
    <dbReference type="NCBI Taxonomy" id="272623"/>
    <lineage>
        <taxon>Bacteria</taxon>
        <taxon>Bacillati</taxon>
        <taxon>Bacillota</taxon>
        <taxon>Bacilli</taxon>
        <taxon>Lactobacillales</taxon>
        <taxon>Streptococcaceae</taxon>
        <taxon>Lactococcus</taxon>
    </lineage>
</organism>
<feature type="chain" id="PRO_0000129837" description="Small ribosomal subunit protein uS19">
    <location>
        <begin position="1"/>
        <end position="92"/>
    </location>
</feature>
<comment type="function">
    <text evidence="1">Protein S19 forms a complex with S13 that binds strongly to the 16S ribosomal RNA.</text>
</comment>
<comment type="similarity">
    <text evidence="1">Belongs to the universal ribosomal protein uS19 family.</text>
</comment>
<evidence type="ECO:0000255" key="1">
    <source>
        <dbReference type="HAMAP-Rule" id="MF_00531"/>
    </source>
</evidence>
<evidence type="ECO:0000305" key="2"/>
<proteinExistence type="inferred from homology"/>
<name>RS19_LACLA</name>
<gene>
    <name evidence="1" type="primary">rpsS</name>
    <name type="ordered locus">LL2095</name>
    <name type="ORF">L0396</name>
</gene>
<accession>Q9CDW6</accession>
<dbReference type="EMBL" id="AE005176">
    <property type="protein sequence ID" value="AAK06193.1"/>
    <property type="molecule type" value="Genomic_DNA"/>
</dbReference>
<dbReference type="PIR" id="G86886">
    <property type="entry name" value="G86886"/>
</dbReference>
<dbReference type="RefSeq" id="NP_268252.1">
    <property type="nucleotide sequence ID" value="NC_002662.1"/>
</dbReference>
<dbReference type="RefSeq" id="WP_003129963.1">
    <property type="nucleotide sequence ID" value="NC_002662.1"/>
</dbReference>
<dbReference type="SMR" id="Q9CDW6"/>
<dbReference type="PaxDb" id="272623-L0396"/>
<dbReference type="EnsemblBacteria" id="AAK06193">
    <property type="protein sequence ID" value="AAK06193"/>
    <property type="gene ID" value="L0396"/>
</dbReference>
<dbReference type="GeneID" id="89634442"/>
<dbReference type="KEGG" id="lla:L0396"/>
<dbReference type="PATRIC" id="fig|272623.7.peg.2254"/>
<dbReference type="eggNOG" id="COG0185">
    <property type="taxonomic scope" value="Bacteria"/>
</dbReference>
<dbReference type="HOGENOM" id="CLU_144911_0_1_9"/>
<dbReference type="OrthoDB" id="9797833at2"/>
<dbReference type="Proteomes" id="UP000002196">
    <property type="component" value="Chromosome"/>
</dbReference>
<dbReference type="GO" id="GO:0005737">
    <property type="term" value="C:cytoplasm"/>
    <property type="evidence" value="ECO:0007669"/>
    <property type="project" value="UniProtKB-ARBA"/>
</dbReference>
<dbReference type="GO" id="GO:0015935">
    <property type="term" value="C:small ribosomal subunit"/>
    <property type="evidence" value="ECO:0007669"/>
    <property type="project" value="InterPro"/>
</dbReference>
<dbReference type="GO" id="GO:0019843">
    <property type="term" value="F:rRNA binding"/>
    <property type="evidence" value="ECO:0007669"/>
    <property type="project" value="UniProtKB-UniRule"/>
</dbReference>
<dbReference type="GO" id="GO:0003735">
    <property type="term" value="F:structural constituent of ribosome"/>
    <property type="evidence" value="ECO:0007669"/>
    <property type="project" value="InterPro"/>
</dbReference>
<dbReference type="GO" id="GO:0000028">
    <property type="term" value="P:ribosomal small subunit assembly"/>
    <property type="evidence" value="ECO:0007669"/>
    <property type="project" value="TreeGrafter"/>
</dbReference>
<dbReference type="GO" id="GO:0006412">
    <property type="term" value="P:translation"/>
    <property type="evidence" value="ECO:0007669"/>
    <property type="project" value="UniProtKB-UniRule"/>
</dbReference>
<dbReference type="FunFam" id="3.30.860.10:FF:000001">
    <property type="entry name" value="30S ribosomal protein S19"/>
    <property type="match status" value="1"/>
</dbReference>
<dbReference type="Gene3D" id="3.30.860.10">
    <property type="entry name" value="30s Ribosomal Protein S19, Chain A"/>
    <property type="match status" value="1"/>
</dbReference>
<dbReference type="HAMAP" id="MF_00531">
    <property type="entry name" value="Ribosomal_uS19"/>
    <property type="match status" value="1"/>
</dbReference>
<dbReference type="InterPro" id="IPR002222">
    <property type="entry name" value="Ribosomal_uS19"/>
</dbReference>
<dbReference type="InterPro" id="IPR005732">
    <property type="entry name" value="Ribosomal_uS19_bac-type"/>
</dbReference>
<dbReference type="InterPro" id="IPR020934">
    <property type="entry name" value="Ribosomal_uS19_CS"/>
</dbReference>
<dbReference type="InterPro" id="IPR023575">
    <property type="entry name" value="Ribosomal_uS19_SF"/>
</dbReference>
<dbReference type="NCBIfam" id="TIGR01050">
    <property type="entry name" value="rpsS_bact"/>
    <property type="match status" value="1"/>
</dbReference>
<dbReference type="PANTHER" id="PTHR11880">
    <property type="entry name" value="RIBOSOMAL PROTEIN S19P FAMILY MEMBER"/>
    <property type="match status" value="1"/>
</dbReference>
<dbReference type="PANTHER" id="PTHR11880:SF8">
    <property type="entry name" value="SMALL RIBOSOMAL SUBUNIT PROTEIN US19M"/>
    <property type="match status" value="1"/>
</dbReference>
<dbReference type="Pfam" id="PF00203">
    <property type="entry name" value="Ribosomal_S19"/>
    <property type="match status" value="1"/>
</dbReference>
<dbReference type="PIRSF" id="PIRSF002144">
    <property type="entry name" value="Ribosomal_S19"/>
    <property type="match status" value="1"/>
</dbReference>
<dbReference type="PRINTS" id="PR00975">
    <property type="entry name" value="RIBOSOMALS19"/>
</dbReference>
<dbReference type="SUPFAM" id="SSF54570">
    <property type="entry name" value="Ribosomal protein S19"/>
    <property type="match status" value="1"/>
</dbReference>
<dbReference type="PROSITE" id="PS00323">
    <property type="entry name" value="RIBOSOMAL_S19"/>
    <property type="match status" value="1"/>
</dbReference>
<reference key="1">
    <citation type="journal article" date="2001" name="Genome Res.">
        <title>The complete genome sequence of the lactic acid bacterium Lactococcus lactis ssp. lactis IL1403.</title>
        <authorList>
            <person name="Bolotin A."/>
            <person name="Wincker P."/>
            <person name="Mauger S."/>
            <person name="Jaillon O."/>
            <person name="Malarme K."/>
            <person name="Weissenbach J."/>
            <person name="Ehrlich S.D."/>
            <person name="Sorokin A."/>
        </authorList>
    </citation>
    <scope>NUCLEOTIDE SEQUENCE [LARGE SCALE GENOMIC DNA]</scope>
    <source>
        <strain>IL1403</strain>
    </source>
</reference>
<sequence>MGRSLKKGPFVDEHLMKKVEAQVNAERKSVIKTWSRRSTIFPNFVGLTIAVYDGRKHVPVYVQEDMVGHKLGEFAPTRTYRGHAADDKKTRR</sequence>
<keyword id="KW-1185">Reference proteome</keyword>
<keyword id="KW-0687">Ribonucleoprotein</keyword>
<keyword id="KW-0689">Ribosomal protein</keyword>
<keyword id="KW-0694">RNA-binding</keyword>
<keyword id="KW-0699">rRNA-binding</keyword>